<sequence>MSSWILLAHAETSGFGLNLDLFETNLINLAIIIGLLVYAGRGFLGNLLSNRRAAIEAEIREVEEKLASSAQALSQAQTQLKEAEAEAARLLVEAKARAAAVRQEILDKAAADVERLKATAAQDVSTEQQRVLDELRRYAVAQALSRVETQLSQQLDEAAQQRLIDRSLATL</sequence>
<organism>
    <name type="scientific">Synechococcus elongatus (strain ATCC 33912 / PCC 7942 / FACHB-805)</name>
    <name type="common">Anacystis nidulans R2</name>
    <dbReference type="NCBI Taxonomy" id="1140"/>
    <lineage>
        <taxon>Bacteria</taxon>
        <taxon>Bacillati</taxon>
        <taxon>Cyanobacteriota</taxon>
        <taxon>Cyanophyceae</taxon>
        <taxon>Synechococcales</taxon>
        <taxon>Synechococcaceae</taxon>
        <taxon>Synechococcus</taxon>
    </lineage>
</organism>
<feature type="chain" id="PRO_0000368823" description="ATP synthase subunit b">
    <location>
        <begin position="1"/>
        <end position="171"/>
    </location>
</feature>
<feature type="transmembrane region" description="Helical" evidence="1">
    <location>
        <begin position="26"/>
        <end position="48"/>
    </location>
</feature>
<accession>Q31RF3</accession>
<proteinExistence type="inferred from homology"/>
<gene>
    <name evidence="1" type="primary">atpF</name>
    <name type="ordered locus">Synpcc7942_0334</name>
</gene>
<protein>
    <recommendedName>
        <fullName evidence="1">ATP synthase subunit b</fullName>
    </recommendedName>
    <alternativeName>
        <fullName evidence="1">ATP synthase F(0) sector subunit b</fullName>
    </alternativeName>
    <alternativeName>
        <fullName evidence="1">ATPase subunit I</fullName>
    </alternativeName>
    <alternativeName>
        <fullName evidence="1">F-type ATPase subunit b</fullName>
        <shortName evidence="1">F-ATPase subunit b</shortName>
    </alternativeName>
</protein>
<evidence type="ECO:0000255" key="1">
    <source>
        <dbReference type="HAMAP-Rule" id="MF_01398"/>
    </source>
</evidence>
<comment type="function">
    <text evidence="1">F(1)F(0) ATP synthase produces ATP from ADP in the presence of a proton or sodium gradient. F-type ATPases consist of two structural domains, F(1) containing the extramembraneous catalytic core and F(0) containing the membrane proton channel, linked together by a central stalk and a peripheral stalk. During catalysis, ATP synthesis in the catalytic domain of F(1) is coupled via a rotary mechanism of the central stalk subunits to proton translocation.</text>
</comment>
<comment type="function">
    <text evidence="1">Component of the F(0) channel, it forms part of the peripheral stalk, linking F(1) to F(0).</text>
</comment>
<comment type="subunit">
    <text evidence="1">F-type ATPases have 2 components, F(1) - the catalytic core - and F(0) - the membrane proton channel. F(1) has five subunits: alpha(3), beta(3), gamma(1), delta(1), epsilon(1). F(0) has four main subunits: a(1), b(1), b'(1) and c(10-14). The alpha and beta chains form an alternating ring which encloses part of the gamma chain. F(1) is attached to F(0) by a central stalk formed by the gamma and epsilon chains, while a peripheral stalk is formed by the delta, b and b' chains.</text>
</comment>
<comment type="subcellular location">
    <subcellularLocation>
        <location evidence="1">Cellular thylakoid membrane</location>
        <topology evidence="1">Single-pass membrane protein</topology>
    </subcellularLocation>
</comment>
<comment type="similarity">
    <text evidence="1">Belongs to the ATPase B chain family.</text>
</comment>
<keyword id="KW-0066">ATP synthesis</keyword>
<keyword id="KW-0138">CF(0)</keyword>
<keyword id="KW-0375">Hydrogen ion transport</keyword>
<keyword id="KW-0406">Ion transport</keyword>
<keyword id="KW-0472">Membrane</keyword>
<keyword id="KW-1185">Reference proteome</keyword>
<keyword id="KW-0793">Thylakoid</keyword>
<keyword id="KW-0812">Transmembrane</keyword>
<keyword id="KW-1133">Transmembrane helix</keyword>
<keyword id="KW-0813">Transport</keyword>
<dbReference type="EMBL" id="CP000100">
    <property type="protein sequence ID" value="ABB56366.1"/>
    <property type="molecule type" value="Genomic_DNA"/>
</dbReference>
<dbReference type="RefSeq" id="WP_011377538.1">
    <property type="nucleotide sequence ID" value="NZ_JACJTX010000002.1"/>
</dbReference>
<dbReference type="SMR" id="Q31RF3"/>
<dbReference type="STRING" id="1140.Synpcc7942_0334"/>
<dbReference type="PaxDb" id="1140-Synpcc7942_0334"/>
<dbReference type="KEGG" id="syf:Synpcc7942_0334"/>
<dbReference type="eggNOG" id="COG0711">
    <property type="taxonomic scope" value="Bacteria"/>
</dbReference>
<dbReference type="HOGENOM" id="CLU_079215_8_1_3"/>
<dbReference type="OrthoDB" id="461217at2"/>
<dbReference type="BioCyc" id="MetaCyc:SYNPCC7942_0334-MONOMER"/>
<dbReference type="BioCyc" id="SYNEL:SYNPCC7942_0334-MONOMER"/>
<dbReference type="Proteomes" id="UP000889800">
    <property type="component" value="Chromosome"/>
</dbReference>
<dbReference type="GO" id="GO:0031676">
    <property type="term" value="C:plasma membrane-derived thylakoid membrane"/>
    <property type="evidence" value="ECO:0007669"/>
    <property type="project" value="UniProtKB-SubCell"/>
</dbReference>
<dbReference type="GO" id="GO:0045259">
    <property type="term" value="C:proton-transporting ATP synthase complex"/>
    <property type="evidence" value="ECO:0007669"/>
    <property type="project" value="UniProtKB-KW"/>
</dbReference>
<dbReference type="GO" id="GO:0046933">
    <property type="term" value="F:proton-transporting ATP synthase activity, rotational mechanism"/>
    <property type="evidence" value="ECO:0007669"/>
    <property type="project" value="UniProtKB-UniRule"/>
</dbReference>
<dbReference type="CDD" id="cd06503">
    <property type="entry name" value="ATP-synt_Fo_b"/>
    <property type="match status" value="1"/>
</dbReference>
<dbReference type="Gene3D" id="1.20.5.620">
    <property type="entry name" value="F1F0 ATP synthase subunit B, membrane domain"/>
    <property type="match status" value="1"/>
</dbReference>
<dbReference type="HAMAP" id="MF_01398">
    <property type="entry name" value="ATP_synth_b_bprime"/>
    <property type="match status" value="1"/>
</dbReference>
<dbReference type="InterPro" id="IPR028987">
    <property type="entry name" value="ATP_synth_B-like_membr_sf"/>
</dbReference>
<dbReference type="InterPro" id="IPR002146">
    <property type="entry name" value="ATP_synth_b/b'su_bac/chlpt"/>
</dbReference>
<dbReference type="NCBIfam" id="NF005606">
    <property type="entry name" value="PRK07352.1"/>
    <property type="match status" value="1"/>
</dbReference>
<dbReference type="PANTHER" id="PTHR34264">
    <property type="entry name" value="ATP SYNTHASE SUBUNIT B, CHLOROPLASTIC"/>
    <property type="match status" value="1"/>
</dbReference>
<dbReference type="PANTHER" id="PTHR34264:SF3">
    <property type="entry name" value="ATP SYNTHASE SUBUNIT B, CHLOROPLASTIC"/>
    <property type="match status" value="1"/>
</dbReference>
<dbReference type="Pfam" id="PF00430">
    <property type="entry name" value="ATP-synt_B"/>
    <property type="match status" value="1"/>
</dbReference>
<dbReference type="SUPFAM" id="SSF81573">
    <property type="entry name" value="F1F0 ATP synthase subunit B, membrane domain"/>
    <property type="match status" value="1"/>
</dbReference>
<name>ATPF_SYNE7</name>
<reference key="1">
    <citation type="submission" date="2005-08" db="EMBL/GenBank/DDBJ databases">
        <title>Complete sequence of chromosome 1 of Synechococcus elongatus PCC 7942.</title>
        <authorList>
            <consortium name="US DOE Joint Genome Institute"/>
            <person name="Copeland A."/>
            <person name="Lucas S."/>
            <person name="Lapidus A."/>
            <person name="Barry K."/>
            <person name="Detter J.C."/>
            <person name="Glavina T."/>
            <person name="Hammon N."/>
            <person name="Israni S."/>
            <person name="Pitluck S."/>
            <person name="Schmutz J."/>
            <person name="Larimer F."/>
            <person name="Land M."/>
            <person name="Kyrpides N."/>
            <person name="Lykidis A."/>
            <person name="Golden S."/>
            <person name="Richardson P."/>
        </authorList>
    </citation>
    <scope>NUCLEOTIDE SEQUENCE [LARGE SCALE GENOMIC DNA]</scope>
    <source>
        <strain>ATCC 33912 / PCC 7942 / FACHB-805</strain>
    </source>
</reference>